<proteinExistence type="inferred from homology"/>
<organism>
    <name type="scientific">Citrobacter koseri (strain ATCC BAA-895 / CDC 4225-83 / SGSC4696)</name>
    <dbReference type="NCBI Taxonomy" id="290338"/>
    <lineage>
        <taxon>Bacteria</taxon>
        <taxon>Pseudomonadati</taxon>
        <taxon>Pseudomonadota</taxon>
        <taxon>Gammaproteobacteria</taxon>
        <taxon>Enterobacterales</taxon>
        <taxon>Enterobacteriaceae</taxon>
        <taxon>Citrobacter</taxon>
    </lineage>
</organism>
<dbReference type="EMBL" id="CP000822">
    <property type="protein sequence ID" value="ABV14217.1"/>
    <property type="molecule type" value="Genomic_DNA"/>
</dbReference>
<dbReference type="RefSeq" id="WP_012133924.1">
    <property type="nucleotide sequence ID" value="NC_009792.1"/>
</dbReference>
<dbReference type="STRING" id="290338.CKO_03126"/>
<dbReference type="GeneID" id="45136919"/>
<dbReference type="KEGG" id="cko:CKO_03126"/>
<dbReference type="HOGENOM" id="CLU_032288_0_0_6"/>
<dbReference type="OrthoDB" id="9808671at2"/>
<dbReference type="Proteomes" id="UP000008148">
    <property type="component" value="Chromosome"/>
</dbReference>
<dbReference type="GO" id="GO:0005886">
    <property type="term" value="C:plasma membrane"/>
    <property type="evidence" value="ECO:0007669"/>
    <property type="project" value="UniProtKB-SubCell"/>
</dbReference>
<dbReference type="HAMAP" id="MF_00672">
    <property type="entry name" value="UPF0761"/>
    <property type="match status" value="1"/>
</dbReference>
<dbReference type="InterPro" id="IPR023679">
    <property type="entry name" value="UPF0761_bac"/>
</dbReference>
<dbReference type="InterPro" id="IPR017039">
    <property type="entry name" value="Virul_fac_BrkB"/>
</dbReference>
<dbReference type="NCBIfam" id="NF002457">
    <property type="entry name" value="PRK01637.1"/>
    <property type="match status" value="1"/>
</dbReference>
<dbReference type="NCBIfam" id="TIGR00765">
    <property type="entry name" value="yihY_not_rbn"/>
    <property type="match status" value="1"/>
</dbReference>
<dbReference type="PANTHER" id="PTHR30213">
    <property type="entry name" value="INNER MEMBRANE PROTEIN YHJD"/>
    <property type="match status" value="1"/>
</dbReference>
<dbReference type="PANTHER" id="PTHR30213:SF0">
    <property type="entry name" value="UPF0761 MEMBRANE PROTEIN YIHY"/>
    <property type="match status" value="1"/>
</dbReference>
<dbReference type="Pfam" id="PF03631">
    <property type="entry name" value="Virul_fac_BrkB"/>
    <property type="match status" value="1"/>
</dbReference>
<dbReference type="PIRSF" id="PIRSF035875">
    <property type="entry name" value="RNase_BN"/>
    <property type="match status" value="1"/>
</dbReference>
<protein>
    <recommendedName>
        <fullName evidence="1">UPF0761 membrane protein CKO_03126</fullName>
    </recommendedName>
</protein>
<evidence type="ECO:0000255" key="1">
    <source>
        <dbReference type="HAMAP-Rule" id="MF_00672"/>
    </source>
</evidence>
<keyword id="KW-0997">Cell inner membrane</keyword>
<keyword id="KW-1003">Cell membrane</keyword>
<keyword id="KW-0472">Membrane</keyword>
<keyword id="KW-1185">Reference proteome</keyword>
<keyword id="KW-0812">Transmembrane</keyword>
<keyword id="KW-1133">Transmembrane helix</keyword>
<gene>
    <name type="ordered locus">CKO_03126</name>
</gene>
<comment type="subcellular location">
    <subcellularLocation>
        <location evidence="1">Cell inner membrane</location>
        <topology evidence="1">Multi-pass membrane protein</topology>
    </subcellularLocation>
</comment>
<comment type="similarity">
    <text evidence="1">Belongs to the UPF0761 family.</text>
</comment>
<accession>A8AL54</accession>
<name>Y3126_CITK8</name>
<feature type="chain" id="PRO_1000044712" description="UPF0761 membrane protein CKO_03126">
    <location>
        <begin position="1"/>
        <end position="290"/>
    </location>
</feature>
<feature type="transmembrane region" description="Helical" evidence="1">
    <location>
        <begin position="44"/>
        <end position="64"/>
    </location>
</feature>
<feature type="transmembrane region" description="Helical" evidence="1">
    <location>
        <begin position="104"/>
        <end position="124"/>
    </location>
</feature>
<feature type="transmembrane region" description="Helical" evidence="1">
    <location>
        <begin position="140"/>
        <end position="160"/>
    </location>
</feature>
<feature type="transmembrane region" description="Helical" evidence="1">
    <location>
        <begin position="183"/>
        <end position="203"/>
    </location>
</feature>
<feature type="transmembrane region" description="Helical" evidence="1">
    <location>
        <begin position="210"/>
        <end position="230"/>
    </location>
</feature>
<feature type="transmembrane region" description="Helical" evidence="1">
    <location>
        <begin position="244"/>
        <end position="264"/>
    </location>
</feature>
<sequence>MLKNVHQKARHHTRPVRAWLKLLWQRIDEDNMTTLAGNLAYVSLLSLVPLIAVVFALFAAFPMFSDVSLQLRHFIFANFIPATGDVIQRYIEQFVANSNKMTAVGACGLIVTALLLMYAIDSALNTIWRSKRTRPKVYSFAVYWMILTLGPLLAGASLAISSYLLSLRWASELNTVIDNVLRVFPLILSWISFWLLYSIVPTTRVPNRDAVVGAFVAAVLFEAGKKGFALYITMFPSYQLIYGVLAVIPILFVWVYWTWCIVLLGAEITVTLGEYRKLKQAAEQEEADQS</sequence>
<reference key="1">
    <citation type="submission" date="2007-08" db="EMBL/GenBank/DDBJ databases">
        <authorList>
            <consortium name="The Citrobacter koseri Genome Sequencing Project"/>
            <person name="McClelland M."/>
            <person name="Sanderson E.K."/>
            <person name="Porwollik S."/>
            <person name="Spieth J."/>
            <person name="Clifton W.S."/>
            <person name="Latreille P."/>
            <person name="Courtney L."/>
            <person name="Wang C."/>
            <person name="Pepin K."/>
            <person name="Bhonagiri V."/>
            <person name="Nash W."/>
            <person name="Johnson M."/>
            <person name="Thiruvilangam P."/>
            <person name="Wilson R."/>
        </authorList>
    </citation>
    <scope>NUCLEOTIDE SEQUENCE [LARGE SCALE GENOMIC DNA]</scope>
    <source>
        <strain>ATCC BAA-895 / CDC 4225-83 / SGSC4696</strain>
    </source>
</reference>